<name>PLM3_PLAF7</name>
<feature type="propeptide" id="PRO_0000453382" evidence="2">
    <location>
        <begin position="1"/>
        <end position="123"/>
    </location>
</feature>
<feature type="chain" id="PRO_0000453383" description="Plasmepsin III">
    <location>
        <begin position="124"/>
        <end position="451"/>
    </location>
</feature>
<feature type="topological domain" description="Cytoplasmic" evidence="14">
    <location>
        <begin position="1"/>
        <end position="37"/>
    </location>
</feature>
<feature type="transmembrane region" description="Helical; Signal-anchor for type II membrane protein" evidence="3">
    <location>
        <begin position="38"/>
        <end position="58"/>
    </location>
</feature>
<feature type="topological domain" description="Lumenal" evidence="14">
    <location>
        <begin position="59"/>
        <end position="451"/>
    </location>
</feature>
<feature type="domain" description="Peptidase A1" evidence="4">
    <location>
        <begin position="139"/>
        <end position="446"/>
    </location>
</feature>
<feature type="disulfide bond" evidence="9 19 20 21">
    <location>
        <begin position="170"/>
        <end position="175"/>
    </location>
</feature>
<feature type="disulfide bond" evidence="9 19 20 21">
    <location>
        <begin position="372"/>
        <end position="408"/>
    </location>
</feature>
<feature type="mutagenesis site" description="Slight reduction in catalytic efficiency towards a synthetic peptide." evidence="8">
    <original>H</original>
    <variation>A</variation>
    <location>
        <position position="157"/>
    </location>
</feature>
<feature type="mutagenesis site" description="Slight reduction in catalytic efficiency towards a synthetic peptide." evidence="8">
    <original>S</original>
    <variation>A</variation>
    <location>
        <position position="160"/>
    </location>
</feature>
<feature type="mutagenesis site" description="Loss of catalytic activity." evidence="8">
    <original>D</original>
    <variation>A</variation>
    <location>
        <position position="337"/>
    </location>
</feature>
<feature type="strand" evidence="22">
    <location>
        <begin position="127"/>
        <end position="136"/>
    </location>
</feature>
<feature type="strand" evidence="22">
    <location>
        <begin position="138"/>
        <end position="145"/>
    </location>
</feature>
<feature type="turn" evidence="22">
    <location>
        <begin position="146"/>
        <end position="149"/>
    </location>
</feature>
<feature type="strand" evidence="22">
    <location>
        <begin position="150"/>
        <end position="157"/>
    </location>
</feature>
<feature type="strand" evidence="22">
    <location>
        <begin position="163"/>
        <end position="167"/>
    </location>
</feature>
<feature type="helix" evidence="22">
    <location>
        <begin position="173"/>
        <end position="175"/>
    </location>
</feature>
<feature type="helix" evidence="22">
    <location>
        <begin position="183"/>
        <end position="185"/>
    </location>
</feature>
<feature type="strand" evidence="22">
    <location>
        <begin position="190"/>
        <end position="200"/>
    </location>
</feature>
<feature type="strand" evidence="22">
    <location>
        <begin position="203"/>
        <end position="216"/>
    </location>
</feature>
<feature type="strand" evidence="22">
    <location>
        <begin position="219"/>
        <end position="233"/>
    </location>
</feature>
<feature type="turn" evidence="22">
    <location>
        <begin position="235"/>
        <end position="240"/>
    </location>
</feature>
<feature type="strand" evidence="22">
    <location>
        <begin position="245"/>
        <end position="248"/>
    </location>
</feature>
<feature type="helix" evidence="22">
    <location>
        <begin position="252"/>
        <end position="254"/>
    </location>
</feature>
<feature type="strand" evidence="24">
    <location>
        <begin position="255"/>
        <end position="257"/>
    </location>
</feature>
<feature type="helix" evidence="22">
    <location>
        <begin position="262"/>
        <end position="268"/>
    </location>
</feature>
<feature type="strand" evidence="22">
    <location>
        <begin position="271"/>
        <end position="280"/>
    </location>
</feature>
<feature type="turn" evidence="24">
    <location>
        <begin position="283"/>
        <end position="286"/>
    </location>
</feature>
<feature type="strand" evidence="22">
    <location>
        <begin position="289"/>
        <end position="295"/>
    </location>
</feature>
<feature type="helix" evidence="22">
    <location>
        <begin position="298"/>
        <end position="300"/>
    </location>
</feature>
<feature type="strand" evidence="22">
    <location>
        <begin position="301"/>
        <end position="303"/>
    </location>
</feature>
<feature type="strand" evidence="22">
    <location>
        <begin position="306"/>
        <end position="324"/>
    </location>
</feature>
<feature type="strand" evidence="22">
    <location>
        <begin position="327"/>
        <end position="336"/>
    </location>
</feature>
<feature type="strand" evidence="22">
    <location>
        <begin position="343"/>
        <end position="345"/>
    </location>
</feature>
<feature type="helix" evidence="22">
    <location>
        <begin position="347"/>
        <end position="359"/>
    </location>
</feature>
<feature type="strand" evidence="23">
    <location>
        <begin position="360"/>
        <end position="362"/>
    </location>
</feature>
<feature type="strand" evidence="22">
    <location>
        <begin position="365"/>
        <end position="371"/>
    </location>
</feature>
<feature type="strand" evidence="22">
    <location>
        <begin position="380"/>
        <end position="383"/>
    </location>
</feature>
<feature type="strand" evidence="22">
    <location>
        <begin position="388"/>
        <end position="391"/>
    </location>
</feature>
<feature type="helix" evidence="22">
    <location>
        <begin position="393"/>
        <end position="396"/>
    </location>
</feature>
<feature type="strand" evidence="22">
    <location>
        <begin position="397"/>
        <end position="404"/>
    </location>
</feature>
<feature type="strand" evidence="22">
    <location>
        <begin position="406"/>
        <end position="410"/>
    </location>
</feature>
<feature type="strand" evidence="22">
    <location>
        <begin position="412"/>
        <end position="414"/>
    </location>
</feature>
<feature type="strand" evidence="22">
    <location>
        <begin position="421"/>
        <end position="424"/>
    </location>
</feature>
<feature type="helix" evidence="22">
    <location>
        <begin position="426"/>
        <end position="431"/>
    </location>
</feature>
<feature type="strand" evidence="22">
    <location>
        <begin position="432"/>
        <end position="437"/>
    </location>
</feature>
<feature type="turn" evidence="22">
    <location>
        <begin position="438"/>
        <end position="441"/>
    </location>
</feature>
<feature type="strand" evidence="22">
    <location>
        <begin position="442"/>
        <end position="448"/>
    </location>
</feature>
<proteinExistence type="evidence at protein level"/>
<evidence type="ECO:0000250" key="1">
    <source>
        <dbReference type="UniProtKB" id="P39898"/>
    </source>
</evidence>
<evidence type="ECO:0000250" key="2">
    <source>
        <dbReference type="UniProtKB" id="Q9Y006"/>
    </source>
</evidence>
<evidence type="ECO:0000255" key="3"/>
<evidence type="ECO:0000255" key="4">
    <source>
        <dbReference type="PROSITE-ProRule" id="PRU01103"/>
    </source>
</evidence>
<evidence type="ECO:0000269" key="5">
    <source>
    </source>
</evidence>
<evidence type="ECO:0000269" key="6">
    <source>
    </source>
</evidence>
<evidence type="ECO:0000269" key="7">
    <source>
    </source>
</evidence>
<evidence type="ECO:0000269" key="8">
    <source>
    </source>
</evidence>
<evidence type="ECO:0000269" key="9">
    <source>
    </source>
</evidence>
<evidence type="ECO:0000269" key="10">
    <source>
    </source>
</evidence>
<evidence type="ECO:0000269" key="11">
    <source>
    </source>
</evidence>
<evidence type="ECO:0000303" key="12">
    <source>
    </source>
</evidence>
<evidence type="ECO:0000303" key="13">
    <source>
    </source>
</evidence>
<evidence type="ECO:0000305" key="14"/>
<evidence type="ECO:0000305" key="15">
    <source>
    </source>
</evidence>
<evidence type="ECO:0000305" key="16">
    <source>
    </source>
</evidence>
<evidence type="ECO:0000312" key="17">
    <source>
        <dbReference type="EMBL" id="CZT99788.1"/>
    </source>
</evidence>
<evidence type="ECO:0000312" key="18">
    <source>
        <dbReference type="Proteomes" id="UP000001450"/>
    </source>
</evidence>
<evidence type="ECO:0007744" key="19">
    <source>
        <dbReference type="PDB" id="3FNS"/>
    </source>
</evidence>
<evidence type="ECO:0007744" key="20">
    <source>
        <dbReference type="PDB" id="3FNT"/>
    </source>
</evidence>
<evidence type="ECO:0007744" key="21">
    <source>
        <dbReference type="PDB" id="3FNU"/>
    </source>
</evidence>
<evidence type="ECO:0007829" key="22">
    <source>
        <dbReference type="PDB" id="3FNS"/>
    </source>
</evidence>
<evidence type="ECO:0007829" key="23">
    <source>
        <dbReference type="PDB" id="3FNT"/>
    </source>
</evidence>
<evidence type="ECO:0007829" key="24">
    <source>
        <dbReference type="PDB" id="3FNU"/>
    </source>
</evidence>
<gene>
    <name evidence="14" type="primary">PMIII</name>
    <name evidence="12" type="synonym">HAP</name>
    <name evidence="17" type="ORF">PF3D7_1408100</name>
</gene>
<dbReference type="EC" id="3.4.23.39" evidence="6 8 10"/>
<dbReference type="EMBL" id="LN999946">
    <property type="protein sequence ID" value="CZT99788.1"/>
    <property type="molecule type" value="Genomic_DNA"/>
</dbReference>
<dbReference type="RefSeq" id="XP_001348251.1">
    <property type="nucleotide sequence ID" value="XM_001348215.1"/>
</dbReference>
<dbReference type="PDB" id="3FNS">
    <property type="method" value="X-ray"/>
    <property type="resolution" value="2.50 A"/>
    <property type="chains" value="A/B=120-451"/>
</dbReference>
<dbReference type="PDB" id="3FNT">
    <property type="method" value="X-ray"/>
    <property type="resolution" value="3.30 A"/>
    <property type="chains" value="A=120-451"/>
</dbReference>
<dbReference type="PDB" id="3FNU">
    <property type="method" value="X-ray"/>
    <property type="resolution" value="3.00 A"/>
    <property type="chains" value="A/B/C/D=120-451"/>
</dbReference>
<dbReference type="PDBsum" id="3FNS"/>
<dbReference type="PDBsum" id="3FNT"/>
<dbReference type="PDBsum" id="3FNU"/>
<dbReference type="SMR" id="Q8IM15"/>
<dbReference type="FunCoup" id="Q8IM15">
    <property type="interactions" value="4"/>
</dbReference>
<dbReference type="STRING" id="36329.Q8IM15"/>
<dbReference type="DrugBank" id="DB11638">
    <property type="generic name" value="Artenimol"/>
</dbReference>
<dbReference type="MEROPS" id="A01.043"/>
<dbReference type="SwissPalm" id="Q8IM15"/>
<dbReference type="PaxDb" id="5833-PF14_0078"/>
<dbReference type="EnsemblProtists" id="CZT99788">
    <property type="protein sequence ID" value="CZT99788"/>
    <property type="gene ID" value="PF3D7_1408100"/>
</dbReference>
<dbReference type="GeneID" id="811660"/>
<dbReference type="KEGG" id="pfa:PF3D7_1408100"/>
<dbReference type="VEuPathDB" id="PlasmoDB:PF3D7_1408100"/>
<dbReference type="HOGENOM" id="CLU_013253_3_2_1"/>
<dbReference type="InParanoid" id="Q8IM15"/>
<dbReference type="OMA" id="YGVECAN"/>
<dbReference type="OrthoDB" id="771136at2759"/>
<dbReference type="PhylomeDB" id="Q8IM15"/>
<dbReference type="Reactome" id="R-PFA-2132295">
    <property type="pathway name" value="MHC class II antigen presentation"/>
</dbReference>
<dbReference type="Reactome" id="R-PFA-6798695">
    <property type="pathway name" value="Neutrophil degranulation"/>
</dbReference>
<dbReference type="EvolutionaryTrace" id="Q8IM15"/>
<dbReference type="Proteomes" id="UP000001450">
    <property type="component" value="Chromosome 14"/>
</dbReference>
<dbReference type="GO" id="GO:0020020">
    <property type="term" value="C:food vacuole"/>
    <property type="evidence" value="ECO:0000314"/>
    <property type="project" value="UniProtKB"/>
</dbReference>
<dbReference type="GO" id="GO:0005764">
    <property type="term" value="C:lysosome"/>
    <property type="evidence" value="ECO:0000318"/>
    <property type="project" value="GO_Central"/>
</dbReference>
<dbReference type="GO" id="GO:0016020">
    <property type="term" value="C:membrane"/>
    <property type="evidence" value="ECO:0007669"/>
    <property type="project" value="UniProtKB-SubCell"/>
</dbReference>
<dbReference type="GO" id="GO:0005775">
    <property type="term" value="C:vacuolar lumen"/>
    <property type="evidence" value="ECO:0007669"/>
    <property type="project" value="UniProtKB-SubCell"/>
</dbReference>
<dbReference type="GO" id="GO:0004190">
    <property type="term" value="F:aspartic-type endopeptidase activity"/>
    <property type="evidence" value="ECO:0000314"/>
    <property type="project" value="UniProtKB"/>
</dbReference>
<dbReference type="GO" id="GO:0044002">
    <property type="term" value="P:acquisition of nutrients from host"/>
    <property type="evidence" value="ECO:0000314"/>
    <property type="project" value="UniProtKB"/>
</dbReference>
<dbReference type="GO" id="GO:0006508">
    <property type="term" value="P:proteolysis"/>
    <property type="evidence" value="ECO:0000318"/>
    <property type="project" value="GO_Central"/>
</dbReference>
<dbReference type="CDD" id="cd05471">
    <property type="entry name" value="pepsin_like"/>
    <property type="match status" value="1"/>
</dbReference>
<dbReference type="FunFam" id="2.40.70.10:FF:000035">
    <property type="entry name" value="Plasmepsin-2"/>
    <property type="match status" value="1"/>
</dbReference>
<dbReference type="FunFam" id="2.40.70.10:FF:000038">
    <property type="entry name" value="Plasmepsin-2"/>
    <property type="match status" value="1"/>
</dbReference>
<dbReference type="Gene3D" id="2.40.70.10">
    <property type="entry name" value="Acid Proteases"/>
    <property type="match status" value="2"/>
</dbReference>
<dbReference type="InterPro" id="IPR001461">
    <property type="entry name" value="Aspartic_peptidase_A1"/>
</dbReference>
<dbReference type="InterPro" id="IPR034164">
    <property type="entry name" value="Pepsin-like_dom"/>
</dbReference>
<dbReference type="InterPro" id="IPR033121">
    <property type="entry name" value="PEPTIDASE_A1"/>
</dbReference>
<dbReference type="InterPro" id="IPR021109">
    <property type="entry name" value="Peptidase_aspartic_dom_sf"/>
</dbReference>
<dbReference type="PANTHER" id="PTHR47966">
    <property type="entry name" value="BETA-SITE APP-CLEAVING ENZYME, ISOFORM A-RELATED"/>
    <property type="match status" value="1"/>
</dbReference>
<dbReference type="PANTHER" id="PTHR47966:SF51">
    <property type="entry name" value="BETA-SITE APP-CLEAVING ENZYME, ISOFORM A-RELATED"/>
    <property type="match status" value="1"/>
</dbReference>
<dbReference type="Pfam" id="PF00026">
    <property type="entry name" value="Asp"/>
    <property type="match status" value="1"/>
</dbReference>
<dbReference type="PRINTS" id="PR00792">
    <property type="entry name" value="PEPSIN"/>
</dbReference>
<dbReference type="SUPFAM" id="SSF50630">
    <property type="entry name" value="Acid proteases"/>
    <property type="match status" value="1"/>
</dbReference>
<dbReference type="PROSITE" id="PS51767">
    <property type="entry name" value="PEPTIDASE_A1"/>
    <property type="match status" value="1"/>
</dbReference>
<comment type="function">
    <text evidence="6 14">During the asexual blood stage, catalyzes the cleavage of denatured host hemoglobin (Hb) or globins (PubMed:16624575). Digestion of host Hb is an essential step which provides the parasite with amino acids for protein synthesis, and regulates osmolarity (Probable).</text>
</comment>
<comment type="catalytic activity">
    <reaction evidence="6 8 10">
        <text>Hydrolysis of the bonds linking certain hydrophobic residues in hemoglobin or globin. Also cleaves small molecules substrates such as Ala-Leu-Glu-Arg-Thr-Phe-|-Phe(NO2)-Ser-Phe-Pro-Thr.</text>
        <dbReference type="EC" id="3.4.23.39"/>
    </reaction>
</comment>
<comment type="activity regulation">
    <text evidence="6 10">Dimerization causes loss of catalytic activity (PubMed:20435072). Inhibited by pepstatin A (PubMed:16624575). Inhibited by Zn(2+) (PubMed:20435072).</text>
</comment>
<comment type="biophysicochemical properties">
    <phDependence>
        <text evidence="6 8">Optimum pH is 5.2 (PubMed:16624575). Activity decreases sharply at pH above 6 (PubMed:16624575). Optimum pH is 5.5-7.5 (PubMed:18312598).</text>
    </phDependence>
</comment>
<comment type="subunit">
    <text evidence="2 10 11 16">Probable homodimer; in the zymogen form (Probable). Monomer; in the active form (PubMed:20435072). Acidification disrupts homodimerization (By similarity). Component of the hemozoin formation complex (HFC) composed of falcipains FP2A and/or FP2B, plasmepsins PMII, PMIII/HAP and PMIV, heme detoxifying protein HDP and falcilysin FLN (PubMed:23471987). The HFC complex is involved in hemoglobin degradation and detoxification of heme in the food vacuole during the asexual blood stage (PubMed:23471987).</text>
</comment>
<comment type="subcellular location">
    <subcellularLocation>
        <location evidence="3">Membrane</location>
        <topology evidence="14">Single-pass type II membrane protein</topology>
    </subcellularLocation>
    <subcellularLocation>
        <location evidence="11">Vacuole lumen</location>
    </subcellularLocation>
    <text evidence="11">In trophozoites, localizes to the digestive (or food) vacuole, an acidic vacuole where host hemoglobin is digested.</text>
</comment>
<comment type="developmental stage">
    <text evidence="11">Expressed during the asexual blood stage; expression begins in trophozoites and continues in schizonts (at protein level).</text>
</comment>
<comment type="PTM">
    <text evidence="1 2 8">Proteolytically cleaved into the soluble active mature form by cysteine proteases in the digestive vacuole of trophozoites (By similarity). Proteolysis requires an acidic environment (By similarity). Transprocessing may serve as an alternate activation system (PubMed:18312598).</text>
</comment>
<comment type="disruption phenotype">
    <text evidence="5 7">No growth defect (PubMed:15513918). However, slight decrease in proliferation and slight increase in doubling time during the asexual blood stage in an amino acid-limited medium (PubMed:15513918). Triple knockout of PMI, PMII and PMIII causes a slight decrease in proliferation during the asexual blood stage in an amino acid-limited medium (PubMed:17581121). Quadruple knockout of PMI, PMII, PMIII and PMIV causes a decrease in proliferation, an impaired proliferation in an amino acid-limited medium, a reduced formation of haemozoin and an abnormal accumulation of endosomal vesicles inside the digestive vacuole (PubMed:17581121).</text>
</comment>
<comment type="similarity">
    <text evidence="14">Belongs to the peptidase A1 family.</text>
</comment>
<comment type="caution">
    <text evidence="6 8 15">Unlike other plasmepsins, one of the two catalytic aspartates, Asp-157, is replaced with histidine; however, the protein is catalytic active (PubMed:16624575). Unlikely to act as a serine protease (PubMed:18312598). His-157 may stabilizes the catalysis and Asp-337 may act as both an acid and a base during catalysis.</text>
</comment>
<comment type="caution">
    <text evidence="14">It is unclear if PMIII is glycosylated as other members of the same enzyme family, ie. PMI and PMII, are not.</text>
</comment>
<organism evidence="18">
    <name type="scientific">Plasmodium falciparum (isolate 3D7)</name>
    <dbReference type="NCBI Taxonomy" id="36329"/>
    <lineage>
        <taxon>Eukaryota</taxon>
        <taxon>Sar</taxon>
        <taxon>Alveolata</taxon>
        <taxon>Apicomplexa</taxon>
        <taxon>Aconoidasida</taxon>
        <taxon>Haemosporida</taxon>
        <taxon>Plasmodiidae</taxon>
        <taxon>Plasmodium</taxon>
        <taxon>Plasmodium (Laverania)</taxon>
    </lineage>
</organism>
<sequence length="451" mass="51693">MNLTIKEEDFTNTFMKNEESFNTFRVTKVKRWNAKRLFKILFVTVFIVLAGGFSYYIFENFVFQKNRKINHIIKTSKYSTVGFNIENSYDRLMKTIKEHKLKNYIKESVKLFNKGLTKKSYLGSEFDNVELKDLANVLSFGEAKLGDNGQKFNFLFHTASSNVWVPSIKCTSESCESKNHYDSSKSKTYEKDDTPVKLTSKAGTISGIFSKDLVTIGKLSVPYKFIEMTEIVGFEPFYSESDVDGVFGLGWKDLSIGSIDPYIVELKTQNKIEQAVYSIYLPPENKNKGYLTIGGIEERFFDGPLNYEKLNHDLMWQVDLDVHFGNVSSKKANVILDSATSVITVPTEFFNQFVESASVFKVPFLSLYVTTCGNTKLPTLEYRSPNKVYTLEPKQYLEPLENIFSALCMLNIVPIDLEKNTFVLGDPFMRKYFTVYDYDNHTVGFALAKNL</sequence>
<reference evidence="18" key="1">
    <citation type="journal article" date="2002" name="Nature">
        <title>Genome sequence of the human malaria parasite Plasmodium falciparum.</title>
        <authorList>
            <person name="Gardner M.J."/>
            <person name="Hall N."/>
            <person name="Fung E."/>
            <person name="White O."/>
            <person name="Berriman M."/>
            <person name="Hyman R.W."/>
            <person name="Carlton J.M."/>
            <person name="Pain A."/>
            <person name="Nelson K.E."/>
            <person name="Bowman S."/>
            <person name="Paulsen I.T."/>
            <person name="James K.D."/>
            <person name="Eisen J.A."/>
            <person name="Rutherford K.M."/>
            <person name="Salzberg S.L."/>
            <person name="Craig A."/>
            <person name="Kyes S."/>
            <person name="Chan M.-S."/>
            <person name="Nene V."/>
            <person name="Shallom S.J."/>
            <person name="Suh B."/>
            <person name="Peterson J."/>
            <person name="Angiuoli S."/>
            <person name="Pertea M."/>
            <person name="Allen J."/>
            <person name="Selengut J."/>
            <person name="Haft D."/>
            <person name="Mather M.W."/>
            <person name="Vaidya A.B."/>
            <person name="Martin D.M.A."/>
            <person name="Fairlamb A.H."/>
            <person name="Fraunholz M.J."/>
            <person name="Roos D.S."/>
            <person name="Ralph S.A."/>
            <person name="McFadden G.I."/>
            <person name="Cummings L.M."/>
            <person name="Subramanian G.M."/>
            <person name="Mungall C."/>
            <person name="Venter J.C."/>
            <person name="Carucci D.J."/>
            <person name="Hoffman S.L."/>
            <person name="Newbold C."/>
            <person name="Davis R.W."/>
            <person name="Fraser C.M."/>
            <person name="Barrell B.G."/>
        </authorList>
    </citation>
    <scope>NUCLEOTIDE SEQUENCE [LARGE SCALE GENOMIC DNA]</scope>
    <source>
        <strain evidence="18">3D7</strain>
    </source>
</reference>
<reference evidence="14" key="2">
    <citation type="journal article" date="2005" name="J. Biol. Chem.">
        <title>The role of Plasmodium falciparum food vacuole plasmepsins.</title>
        <authorList>
            <person name="Liu J."/>
            <person name="Gluzman I.Y."/>
            <person name="Drew M.E."/>
            <person name="Goldberg D.E."/>
        </authorList>
    </citation>
    <scope>DISRUPTION PHENOTYPE</scope>
</reference>
<reference evidence="14" key="3">
    <citation type="journal article" date="2006" name="Protein Expr. Purif.">
        <title>Recombinant expression and partial characterization of an active soluble histo-aspartic protease from Plasmodium falciparum.</title>
        <authorList>
            <person name="Xiao H."/>
            <person name="Sinkovits A.F."/>
            <person name="Bryksa B.C."/>
            <person name="Ogawa M."/>
            <person name="Yada R.Y."/>
        </authorList>
    </citation>
    <scope>FUNCTION</scope>
    <scope>CATALYTIC ACTIVITY</scope>
    <scope>ACTIVITY REGULATION</scope>
    <scope>BIOPHYSICOCHEMICAL PROPERTIES</scope>
</reference>
<reference evidence="14" key="4">
    <citation type="journal article" date="2007" name="Mol. Microbiol.">
        <title>Critical roles for the digestive vacuole plasmepsins of Plasmodium falciparum in vacuolar function.</title>
        <authorList>
            <person name="Bonilla J.A."/>
            <person name="Bonilla T.D."/>
            <person name="Yowell C.A."/>
            <person name="Fujioka H."/>
            <person name="Dame J.B."/>
        </authorList>
    </citation>
    <scope>DISRUPTION PHENOTYPE</scope>
</reference>
<reference evidence="14" key="5">
    <citation type="journal article" date="2008" name="FEBS J.">
        <title>The catalytic significance of the proposed active site residues in Plasmodium falciparum histoaspartic protease.</title>
        <authorList>
            <person name="Parr C.L."/>
            <person name="Tanaka T."/>
            <person name="Xiao H."/>
            <person name="Yada R.Y."/>
        </authorList>
    </citation>
    <scope>CATALYTIC ACTIVITY</scope>
    <scope>BIOPHYSICOCHEMICAL PROPERTIES</scope>
    <scope>PROTEOLYTIC CLEAVAGE</scope>
    <scope>MUTAGENESIS OF HIS-157; SER-160 AND ASP-337</scope>
</reference>
<reference evidence="14" key="6">
    <citation type="journal article" date="2010" name="Mol. Biochem. Parasitol.">
        <title>Characterization of the monomer-dimer equilibrium of recombinant histo-aspartic protease from Plasmodium falciparum.</title>
        <authorList>
            <person name="Xiao H."/>
            <person name="Briere L.A."/>
            <person name="Dunn S.D."/>
            <person name="Yada R.Y."/>
        </authorList>
    </citation>
    <scope>CATALYTIC ACTIVITY</scope>
    <scope>ACTIVITY REGULATION</scope>
    <scope>SUBUNIT</scope>
</reference>
<reference evidence="14" key="7">
    <citation type="journal article" date="2013" name="Proc. Natl. Acad. Sci. U.S.A.">
        <title>Protein complex directs hemoglobin-to-hemozoin formation in Plasmodium falciparum.</title>
        <authorList>
            <person name="Chugh M."/>
            <person name="Sundararaman V."/>
            <person name="Kumar S."/>
            <person name="Reddy V.S."/>
            <person name="Siddiqui W.A."/>
            <person name="Stuart K.D."/>
            <person name="Malhotra P."/>
        </authorList>
    </citation>
    <scope>IDENTIFICATION IN THE HEMOZOIN FORMATION COMPLEX</scope>
    <scope>SUBCELLULAR LOCATION</scope>
    <scope>DEVELOPMENTAL STAGE</scope>
    <scope>IDENTIFICATION BY MASS SPECTROMETRY</scope>
</reference>
<reference evidence="19 20 21" key="8">
    <citation type="journal article" date="2009" name="J. Mol. Biol.">
        <title>Crystal structures of the histo-aspartic protease (HAP) from Plasmodium falciparum.</title>
        <authorList>
            <person name="Bhaumik P."/>
            <person name="Xiao H."/>
            <person name="Parr C.L."/>
            <person name="Kiso Y."/>
            <person name="Gustchina A."/>
            <person name="Yada R.Y."/>
            <person name="Wlodawer A."/>
        </authorList>
    </citation>
    <scope>X-RAY CRYSTALLOGRAPHY (2.50 ANGSTROMS) OF 120-451 IN APO FORM AND IN COMPLEX WITH INHIBITOR</scope>
    <scope>DISULFIDE BONDS</scope>
</reference>
<protein>
    <recommendedName>
        <fullName evidence="14">Plasmepsin III</fullName>
        <ecNumber evidence="6 8 10">3.4.23.39</ecNumber>
    </recommendedName>
    <alternativeName>
        <fullName evidence="12">Histo-aspartic protease</fullName>
    </alternativeName>
    <alternativeName>
        <fullName evidence="13">PfHAP</fullName>
    </alternativeName>
    <alternativeName>
        <fullName evidence="14">Plasmepsin 3</fullName>
    </alternativeName>
</protein>
<keyword id="KW-0002">3D-structure</keyword>
<keyword id="KW-0064">Aspartyl protease</keyword>
<keyword id="KW-1015">Disulfide bond</keyword>
<keyword id="KW-0378">Hydrolase</keyword>
<keyword id="KW-0472">Membrane</keyword>
<keyword id="KW-0645">Protease</keyword>
<keyword id="KW-1185">Reference proteome</keyword>
<keyword id="KW-0735">Signal-anchor</keyword>
<keyword id="KW-0812">Transmembrane</keyword>
<keyword id="KW-1133">Transmembrane helix</keyword>
<keyword id="KW-0926">Vacuole</keyword>
<keyword id="KW-0865">Zymogen</keyword>
<accession>Q8IM15</accession>